<sequence length="51" mass="5452">MNGGGVFTDILAASGRIFEVMVEGHWATVGYLFDSLGKGVSRINQNAYGNM</sequence>
<evidence type="ECO:0000255" key="1"/>
<evidence type="ECO:0000305" key="2"/>
<accession>P15525</accession>
<name>CSMA_CHLPH</name>
<protein>
    <recommendedName>
        <fullName>Bacteriochlorophyll e-binding protein</fullName>
        <shortName>BChl e-binding</shortName>
    </recommendedName>
    <alternativeName>
        <fullName>Chlorosome protein A</fullName>
    </alternativeName>
</protein>
<keyword id="KW-0076">Bacteriochlorophyll</keyword>
<keyword id="KW-0148">Chlorophyll</keyword>
<keyword id="KW-0151">Chlorosome</keyword>
<keyword id="KW-0157">Chromophore</keyword>
<keyword id="KW-0903">Direct protein sequencing</keyword>
<keyword id="KW-0249">Electron transport</keyword>
<keyword id="KW-0460">Magnesium</keyword>
<keyword id="KW-0479">Metal-binding</keyword>
<keyword id="KW-0602">Photosynthesis</keyword>
<keyword id="KW-0813">Transport</keyword>
<proteinExistence type="evidence at protein level"/>
<dbReference type="PIR" id="S05563">
    <property type="entry name" value="S05563"/>
</dbReference>
<dbReference type="SMR" id="P15525"/>
<dbReference type="GO" id="GO:0033105">
    <property type="term" value="C:chlorosome envelope"/>
    <property type="evidence" value="ECO:0007669"/>
    <property type="project" value="UniProtKB-SubCell"/>
</dbReference>
<dbReference type="GO" id="GO:0042314">
    <property type="term" value="F:bacteriochlorophyll binding"/>
    <property type="evidence" value="ECO:0007669"/>
    <property type="project" value="UniProtKB-KW"/>
</dbReference>
<dbReference type="GO" id="GO:0046872">
    <property type="term" value="F:metal ion binding"/>
    <property type="evidence" value="ECO:0007669"/>
    <property type="project" value="UniProtKB-KW"/>
</dbReference>
<dbReference type="GO" id="GO:0015979">
    <property type="term" value="P:photosynthesis"/>
    <property type="evidence" value="ECO:0007669"/>
    <property type="project" value="UniProtKB-KW"/>
</dbReference>
<dbReference type="Gene3D" id="1.20.5.950">
    <property type="entry name" value="bacteriochlorophyll c-binding protein"/>
    <property type="match status" value="1"/>
</dbReference>
<dbReference type="InterPro" id="IPR001470">
    <property type="entry name" value="Bchl_c-bd"/>
</dbReference>
<dbReference type="InterPro" id="IPR038387">
    <property type="entry name" value="Bchl_C-bd_sf"/>
</dbReference>
<dbReference type="Pfam" id="PF02043">
    <property type="entry name" value="Bac_chlorC"/>
    <property type="match status" value="1"/>
</dbReference>
<dbReference type="PIRSF" id="PIRSF002903">
    <property type="entry name" value="Bac_chlorC_bd"/>
    <property type="match status" value="1"/>
</dbReference>
<dbReference type="PRINTS" id="PR00656">
    <property type="entry name" value="BCHLROPHYLLC"/>
</dbReference>
<reference key="1">
    <citation type="journal article" date="1988" name="FEBS Lett.">
        <title>The BChlc/e-binding polypeptides from chlorosomes of green photosynthetic bacteria.</title>
        <authorList>
            <person name="Wagner-Huber R."/>
            <person name="Brunisholz R."/>
            <person name="Frank G."/>
            <person name="Zuber H."/>
        </authorList>
    </citation>
    <scope>PROTEIN SEQUENCE</scope>
    <source>
        <strain>2631</strain>
    </source>
</reference>
<comment type="function">
    <text>Component of the photosynthetic apparatus. The light harvesting B740 complex binds bacteriochlorophyll e.</text>
</comment>
<comment type="subcellular location">
    <subcellularLocation>
        <location>Chlorosome</location>
        <location>Chlorosome envelope</location>
    </subcellularLocation>
</comment>
<comment type="similarity">
    <text evidence="2">Belongs to the BChl C/E-binding protein family.</text>
</comment>
<gene>
    <name type="primary">csmA</name>
</gene>
<feature type="chain" id="PRO_0000219551" description="Bacteriochlorophyll e-binding protein">
    <location>
        <begin position="1"/>
        <end position="51" status="greater than"/>
    </location>
</feature>
<feature type="binding site" description="axial binding residue" evidence="1">
    <location>
        <position position="25"/>
    </location>
    <ligand>
        <name>a bacteriochlorophyll e</name>
        <dbReference type="ChEBI" id="CHEBI:189438"/>
    </ligand>
    <ligandPart>
        <name>Mg</name>
        <dbReference type="ChEBI" id="CHEBI:25107"/>
    </ligandPart>
</feature>
<feature type="non-terminal residue">
    <location>
        <position position="51"/>
    </location>
</feature>
<organism>
    <name type="scientific">Chlorobium phaeovibrioides</name>
    <dbReference type="NCBI Taxonomy" id="1094"/>
    <lineage>
        <taxon>Bacteria</taxon>
        <taxon>Pseudomonadati</taxon>
        <taxon>Chlorobiota</taxon>
        <taxon>Chlorobiia</taxon>
        <taxon>Chlorobiales</taxon>
        <taxon>Chlorobiaceae</taxon>
        <taxon>Chlorobium/Pelodictyon group</taxon>
        <taxon>Chlorobium</taxon>
    </lineage>
</organism>